<name>GATE_PYRAE</name>
<feature type="chain" id="PRO_0000140077" description="Glutamyl-tRNA(Gln) amidotransferase subunit E">
    <location>
        <begin position="1"/>
        <end position="608"/>
    </location>
</feature>
<accession>Q8ZTJ3</accession>
<gene>
    <name evidence="1" type="primary">gatE</name>
    <name type="ordered locus">PAE3222</name>
</gene>
<protein>
    <recommendedName>
        <fullName evidence="1">Glutamyl-tRNA(Gln) amidotransferase subunit E</fullName>
        <shortName evidence="1">Glu-ADT subunit E</shortName>
        <ecNumber evidence="1">6.3.5.-</ecNumber>
    </recommendedName>
</protein>
<organism>
    <name type="scientific">Pyrobaculum aerophilum (strain ATCC 51768 / DSM 7523 / JCM 9630 / CIP 104966 / NBRC 100827 / IM2)</name>
    <dbReference type="NCBI Taxonomy" id="178306"/>
    <lineage>
        <taxon>Archaea</taxon>
        <taxon>Thermoproteota</taxon>
        <taxon>Thermoprotei</taxon>
        <taxon>Thermoproteales</taxon>
        <taxon>Thermoproteaceae</taxon>
        <taxon>Pyrobaculum</taxon>
    </lineage>
</organism>
<reference key="1">
    <citation type="journal article" date="2002" name="Proc. Natl. Acad. Sci. U.S.A.">
        <title>Genome sequence of the hyperthermophilic crenarchaeon Pyrobaculum aerophilum.</title>
        <authorList>
            <person name="Fitz-Gibbon S.T."/>
            <person name="Ladner H."/>
            <person name="Kim U.-J."/>
            <person name="Stetter K.O."/>
            <person name="Simon M.I."/>
            <person name="Miller J.H."/>
        </authorList>
    </citation>
    <scope>NUCLEOTIDE SEQUENCE [LARGE SCALE GENOMIC DNA]</scope>
    <source>
        <strain>ATCC 51768 / DSM 7523 / JCM 9630 / CIP 104966 / NBRC 100827 / IM2</strain>
    </source>
</reference>
<keyword id="KW-0067">ATP-binding</keyword>
<keyword id="KW-0436">Ligase</keyword>
<keyword id="KW-0547">Nucleotide-binding</keyword>
<keyword id="KW-0648">Protein biosynthesis</keyword>
<keyword id="KW-1185">Reference proteome</keyword>
<evidence type="ECO:0000255" key="1">
    <source>
        <dbReference type="HAMAP-Rule" id="MF_00588"/>
    </source>
</evidence>
<comment type="function">
    <text evidence="1">Allows the formation of correctly charged Gln-tRNA(Gln) through the transamidation of misacylated Glu-tRNA(Gln) in organisms which lack glutaminyl-tRNA synthetase. The reaction takes place in the presence of glutamine and ATP through an activated gamma-phospho-Glu-tRNA(Gln). The GatDE system is specific for glutamate and does not act on aspartate.</text>
</comment>
<comment type="catalytic activity">
    <reaction evidence="1">
        <text>L-glutamyl-tRNA(Gln) + L-glutamine + ATP + H2O = L-glutaminyl-tRNA(Gln) + L-glutamate + ADP + phosphate + H(+)</text>
        <dbReference type="Rhea" id="RHEA:17521"/>
        <dbReference type="Rhea" id="RHEA-COMP:9681"/>
        <dbReference type="Rhea" id="RHEA-COMP:9684"/>
        <dbReference type="ChEBI" id="CHEBI:15377"/>
        <dbReference type="ChEBI" id="CHEBI:15378"/>
        <dbReference type="ChEBI" id="CHEBI:29985"/>
        <dbReference type="ChEBI" id="CHEBI:30616"/>
        <dbReference type="ChEBI" id="CHEBI:43474"/>
        <dbReference type="ChEBI" id="CHEBI:58359"/>
        <dbReference type="ChEBI" id="CHEBI:78520"/>
        <dbReference type="ChEBI" id="CHEBI:78521"/>
        <dbReference type="ChEBI" id="CHEBI:456216"/>
    </reaction>
</comment>
<comment type="subunit">
    <text evidence="1">Heterodimer of GatD and GatE.</text>
</comment>
<comment type="similarity">
    <text evidence="1">Belongs to the GatB/GatE family. GatE subfamily.</text>
</comment>
<sequence>MDYKALGLKTGLEIHIQLNTQRKLFCHCPPVLRDDEPHFRVERRLHISVSELGAVDPAVVWEVRKRRKYIYEGYRDTTCLVELDEEPPHLPDEEALVTAVAVAKMFNAKLFDEIYVMRKTVVDGSNVSGFQRTMLIAYGGRAKILGYDIGVETIALEEDAARKISEEGKAMVYRLDRLGIPLIEIATEPMAYTPQEVEEVAWIIGYSVKITGRAKRGVGTVRQDVNVSIAGGAKTEIKGVPDLSLIPKVIEYEAVRQVNLLKIAEELKRRGVGRVELSVADVTAAFANTKSRLVRKVLDSGGRVLALKTPGFQKLLGFEIQPGRRFGSELADYVRAWTELGGLLHSDELPGYGITAEEVREVANRLGVESFILLMGVEESELLEAAQVVVERLNMAPKGVPEETRAANPDGTTRFLRPRPGAARMYPETDLPPVKITFEIMKRAEEVAKINLDAKFKELISLGLSKDLALQLIKSPHLEKFEEYLDKFRSVPPQLIASILLNISKALAREGVEIDGAKIESVLDALNRRVITKEAVEEILRNMRPGESAEEVARRLGLVRLPYEEVKKIVEEVSRQTAKEKIIGEVMRRYRGRVDIEDVKRALAEIAS</sequence>
<proteinExistence type="inferred from homology"/>
<dbReference type="EC" id="6.3.5.-" evidence="1"/>
<dbReference type="EMBL" id="AE009441">
    <property type="protein sequence ID" value="AAL64768.1"/>
    <property type="molecule type" value="Genomic_DNA"/>
</dbReference>
<dbReference type="RefSeq" id="WP_011009236.1">
    <property type="nucleotide sequence ID" value="NC_003364.1"/>
</dbReference>
<dbReference type="SMR" id="Q8ZTJ3"/>
<dbReference type="FunCoup" id="Q8ZTJ3">
    <property type="interactions" value="20"/>
</dbReference>
<dbReference type="STRING" id="178306.PAE3222"/>
<dbReference type="EnsemblBacteria" id="AAL64768">
    <property type="protein sequence ID" value="AAL64768"/>
    <property type="gene ID" value="PAE3222"/>
</dbReference>
<dbReference type="GeneID" id="1463951"/>
<dbReference type="KEGG" id="pai:PAE3222"/>
<dbReference type="PATRIC" id="fig|178306.9.peg.2427"/>
<dbReference type="eggNOG" id="arCOG01719">
    <property type="taxonomic scope" value="Archaea"/>
</dbReference>
<dbReference type="HOGENOM" id="CLU_030702_0_0_2"/>
<dbReference type="InParanoid" id="Q8ZTJ3"/>
<dbReference type="Proteomes" id="UP000002439">
    <property type="component" value="Chromosome"/>
</dbReference>
<dbReference type="GO" id="GO:0005737">
    <property type="term" value="C:cytoplasm"/>
    <property type="evidence" value="ECO:0007669"/>
    <property type="project" value="InterPro"/>
</dbReference>
<dbReference type="GO" id="GO:0004812">
    <property type="term" value="F:aminoacyl-tRNA ligase activity"/>
    <property type="evidence" value="ECO:0007669"/>
    <property type="project" value="InterPro"/>
</dbReference>
<dbReference type="GO" id="GO:0005524">
    <property type="term" value="F:ATP binding"/>
    <property type="evidence" value="ECO:0007669"/>
    <property type="project" value="UniProtKB-KW"/>
</dbReference>
<dbReference type="GO" id="GO:0050567">
    <property type="term" value="F:glutaminyl-tRNA synthase (glutamine-hydrolyzing) activity"/>
    <property type="evidence" value="ECO:0000318"/>
    <property type="project" value="GO_Central"/>
</dbReference>
<dbReference type="GO" id="GO:0070681">
    <property type="term" value="P:glutaminyl-tRNAGln biosynthesis via transamidation"/>
    <property type="evidence" value="ECO:0000318"/>
    <property type="project" value="GO_Central"/>
</dbReference>
<dbReference type="GO" id="GO:0006412">
    <property type="term" value="P:translation"/>
    <property type="evidence" value="ECO:0007669"/>
    <property type="project" value="UniProtKB-UniRule"/>
</dbReference>
<dbReference type="Gene3D" id="3.30.1360.30">
    <property type="entry name" value="GAD-like domain"/>
    <property type="match status" value="1"/>
</dbReference>
<dbReference type="Gene3D" id="1.10.150.380">
    <property type="entry name" value="GatB domain, N-terminal subdomain"/>
    <property type="match status" value="1"/>
</dbReference>
<dbReference type="HAMAP" id="MF_00588">
    <property type="entry name" value="GatE"/>
    <property type="match status" value="1"/>
</dbReference>
<dbReference type="InterPro" id="IPR017959">
    <property type="entry name" value="Asn/Gln-tRNA_amidoTrfase_suB/E"/>
</dbReference>
<dbReference type="InterPro" id="IPR006075">
    <property type="entry name" value="Asn/Gln-tRNA_Trfase_suB/E_cat"/>
</dbReference>
<dbReference type="InterPro" id="IPR018027">
    <property type="entry name" value="Asn/Gln_amidotransferase"/>
</dbReference>
<dbReference type="InterPro" id="IPR003789">
    <property type="entry name" value="Asn/Gln_tRNA_amidoTrase-B-like"/>
</dbReference>
<dbReference type="InterPro" id="IPR004115">
    <property type="entry name" value="GAD-like_sf"/>
</dbReference>
<dbReference type="InterPro" id="IPR029351">
    <property type="entry name" value="GAD_dom"/>
</dbReference>
<dbReference type="InterPro" id="IPR042114">
    <property type="entry name" value="GatB_C_1"/>
</dbReference>
<dbReference type="InterPro" id="IPR004414">
    <property type="entry name" value="GatE"/>
</dbReference>
<dbReference type="InterPro" id="IPR017958">
    <property type="entry name" value="Gln-tRNA_amidoTrfase_suB_CS"/>
</dbReference>
<dbReference type="InterPro" id="IPR014746">
    <property type="entry name" value="Gln_synth/guanido_kin_cat_dom"/>
</dbReference>
<dbReference type="NCBIfam" id="TIGR00134">
    <property type="entry name" value="gatE_arch"/>
    <property type="match status" value="1"/>
</dbReference>
<dbReference type="NCBIfam" id="NF003107">
    <property type="entry name" value="PRK04028.1"/>
    <property type="match status" value="1"/>
</dbReference>
<dbReference type="PANTHER" id="PTHR11659">
    <property type="entry name" value="GLUTAMYL-TRNA GLN AMIDOTRANSFERASE SUBUNIT B MITOCHONDRIAL AND PROKARYOTIC PET112-RELATED"/>
    <property type="match status" value="1"/>
</dbReference>
<dbReference type="PANTHER" id="PTHR11659:SF2">
    <property type="entry name" value="GLUTAMYL-TRNA(GLN) AMIDOTRANSFERASE SUBUNIT E"/>
    <property type="match status" value="1"/>
</dbReference>
<dbReference type="Pfam" id="PF02938">
    <property type="entry name" value="GAD"/>
    <property type="match status" value="1"/>
</dbReference>
<dbReference type="Pfam" id="PF02934">
    <property type="entry name" value="GatB_N"/>
    <property type="match status" value="1"/>
</dbReference>
<dbReference type="Pfam" id="PF02637">
    <property type="entry name" value="GatB_Yqey"/>
    <property type="match status" value="1"/>
</dbReference>
<dbReference type="SMART" id="SM00845">
    <property type="entry name" value="GatB_Yqey"/>
    <property type="match status" value="1"/>
</dbReference>
<dbReference type="SUPFAM" id="SSF55261">
    <property type="entry name" value="GAD domain-like"/>
    <property type="match status" value="1"/>
</dbReference>
<dbReference type="SUPFAM" id="SSF89095">
    <property type="entry name" value="GatB/YqeY motif"/>
    <property type="match status" value="1"/>
</dbReference>
<dbReference type="SUPFAM" id="SSF55931">
    <property type="entry name" value="Glutamine synthetase/guanido kinase"/>
    <property type="match status" value="1"/>
</dbReference>
<dbReference type="PROSITE" id="PS01234">
    <property type="entry name" value="GATB"/>
    <property type="match status" value="1"/>
</dbReference>